<protein>
    <recommendedName>
        <fullName evidence="1">Mycobacterial beta-ketoacyl-[acyl-carrier-protein] synthase III</fullName>
        <shortName evidence="1">Beta-ketoacyl-ACP synthase III</shortName>
        <shortName evidence="1">KAS III</shortName>
        <ecNumber evidence="1">2.3.1.301</ecNumber>
    </recommendedName>
    <alternativeName>
        <fullName evidence="1">3-oxoacyl-[acyl-carrier-protein] synthase 3</fullName>
    </alternativeName>
    <alternativeName>
        <fullName evidence="1">3-oxoacyl-[acyl-carrier-protein] synthase III</fullName>
    </alternativeName>
</protein>
<proteinExistence type="inferred from homology"/>
<evidence type="ECO:0000255" key="1">
    <source>
        <dbReference type="HAMAP-Rule" id="MF_01815"/>
    </source>
</evidence>
<evidence type="ECO:0000305" key="2"/>
<accession>P0A575</accession>
<accession>A0A1R3XWN5</accession>
<accession>O06399</accession>
<accession>X2BF69</accession>
<comment type="function">
    <text evidence="1">Catalyzes the condensation reaction of fatty acid synthesis by the addition to an acyl acceptor of two carbons from malonyl-ACP. Catalyzes the first condensation reaction which initiates fatty acid synthesis and may therefore play a role in governing the total rate of fatty acid production. Possesses both acetoacetyl-ACP synthase and acetyl transacylase activities. Its substrate specificity determines the biosynthesis of branched-chain and/or straight-chain of fatty acids.</text>
</comment>
<comment type="catalytic activity">
    <reaction evidence="1">
        <text>malonyl-[ACP] + dodecanoyl-CoA + H(+) = 3-oxotetradecanoyl-[ACP] + CO2 + CoA</text>
        <dbReference type="Rhea" id="RHEA:43640"/>
        <dbReference type="Rhea" id="RHEA-COMP:9623"/>
        <dbReference type="Rhea" id="RHEA-COMP:9645"/>
        <dbReference type="ChEBI" id="CHEBI:15378"/>
        <dbReference type="ChEBI" id="CHEBI:16526"/>
        <dbReference type="ChEBI" id="CHEBI:57287"/>
        <dbReference type="ChEBI" id="CHEBI:57375"/>
        <dbReference type="ChEBI" id="CHEBI:78449"/>
        <dbReference type="ChEBI" id="CHEBI:78473"/>
        <dbReference type="EC" id="2.3.1.301"/>
    </reaction>
    <physiologicalReaction direction="left-to-right" evidence="1">
        <dbReference type="Rhea" id="RHEA:43641"/>
    </physiologicalReaction>
</comment>
<comment type="pathway">
    <text evidence="1">Lipid metabolism; fatty acid biosynthesis.</text>
</comment>
<comment type="pathway">
    <text evidence="1">Lipid metabolism; mycolic acid biosynthesis.</text>
</comment>
<comment type="subunit">
    <text evidence="1">Homodimer.</text>
</comment>
<comment type="subcellular location">
    <subcellularLocation>
        <location evidence="1">Cytoplasm</location>
    </subcellularLocation>
</comment>
<comment type="domain">
    <text evidence="1">The last Arg residue of the ACP-binding site is essential for the weak association between ACP/AcpP and FabH.</text>
</comment>
<comment type="similarity">
    <text evidence="1 2">Belongs to the thiolase-like superfamily. FabH family.</text>
</comment>
<name>FABH_MYCBO</name>
<gene>
    <name evidence="1" type="primary">fabH</name>
    <name type="ordered locus">BQ2027_MB0547C</name>
</gene>
<feature type="chain" id="PRO_0000110444" description="Mycobacterial beta-ketoacyl-[acyl-carrier-protein] synthase III">
    <location>
        <begin position="1"/>
        <end position="335"/>
    </location>
</feature>
<feature type="region of interest" description="ACP-binding" evidence="1">
    <location>
        <begin position="259"/>
        <end position="263"/>
    </location>
</feature>
<feature type="active site" evidence="1">
    <location>
        <position position="122"/>
    </location>
</feature>
<feature type="active site" evidence="1">
    <location>
        <position position="258"/>
    </location>
</feature>
<feature type="active site" evidence="1">
    <location>
        <position position="289"/>
    </location>
</feature>
<organism>
    <name type="scientific">Mycobacterium bovis (strain ATCC BAA-935 / AF2122/97)</name>
    <dbReference type="NCBI Taxonomy" id="233413"/>
    <lineage>
        <taxon>Bacteria</taxon>
        <taxon>Bacillati</taxon>
        <taxon>Actinomycetota</taxon>
        <taxon>Actinomycetes</taxon>
        <taxon>Mycobacteriales</taxon>
        <taxon>Mycobacteriaceae</taxon>
        <taxon>Mycobacterium</taxon>
        <taxon>Mycobacterium tuberculosis complex</taxon>
    </lineage>
</organism>
<dbReference type="EC" id="2.3.1.301" evidence="1"/>
<dbReference type="EMBL" id="LT708304">
    <property type="protein sequence ID" value="SIT99143.1"/>
    <property type="molecule type" value="Genomic_DNA"/>
</dbReference>
<dbReference type="RefSeq" id="NP_854208.1">
    <property type="nucleotide sequence ID" value="NC_002945.3"/>
</dbReference>
<dbReference type="RefSeq" id="WP_003402861.1">
    <property type="nucleotide sequence ID" value="NC_002945.4"/>
</dbReference>
<dbReference type="SMR" id="P0A575"/>
<dbReference type="GeneID" id="45424497"/>
<dbReference type="PATRIC" id="fig|233413.5.peg.595"/>
<dbReference type="UniPathway" id="UPA00094"/>
<dbReference type="UniPathway" id="UPA00915"/>
<dbReference type="Proteomes" id="UP000001419">
    <property type="component" value="Chromosome"/>
</dbReference>
<dbReference type="GO" id="GO:0005737">
    <property type="term" value="C:cytoplasm"/>
    <property type="evidence" value="ECO:0007669"/>
    <property type="project" value="UniProtKB-SubCell"/>
</dbReference>
<dbReference type="GO" id="GO:0004315">
    <property type="term" value="F:3-oxoacyl-[acyl-carrier-protein] synthase activity"/>
    <property type="evidence" value="ECO:0007669"/>
    <property type="project" value="InterPro"/>
</dbReference>
<dbReference type="GO" id="GO:0033818">
    <property type="term" value="F:beta-ketoacyl-acyl-carrier-protein synthase III activity"/>
    <property type="evidence" value="ECO:0007669"/>
    <property type="project" value="UniProtKB-UniRule"/>
</dbReference>
<dbReference type="GO" id="GO:0006633">
    <property type="term" value="P:fatty acid biosynthetic process"/>
    <property type="evidence" value="ECO:0007669"/>
    <property type="project" value="UniProtKB-UniRule"/>
</dbReference>
<dbReference type="CDD" id="cd00830">
    <property type="entry name" value="KAS_III"/>
    <property type="match status" value="1"/>
</dbReference>
<dbReference type="FunFam" id="3.40.47.10:FF:000071">
    <property type="entry name" value="3-oxoacyl-[acyl-carrier-protein] synthase 3"/>
    <property type="match status" value="1"/>
</dbReference>
<dbReference type="FunFam" id="3.40.47.10:FF:000076">
    <property type="entry name" value="3-oxoacyl-[acyl-carrier-protein] synthase 3"/>
    <property type="match status" value="1"/>
</dbReference>
<dbReference type="Gene3D" id="3.40.47.10">
    <property type="match status" value="2"/>
</dbReference>
<dbReference type="HAMAP" id="MF_01815">
    <property type="entry name" value="FabH"/>
    <property type="match status" value="1"/>
</dbReference>
<dbReference type="InterPro" id="IPR013747">
    <property type="entry name" value="ACP_syn_III_C"/>
</dbReference>
<dbReference type="InterPro" id="IPR013751">
    <property type="entry name" value="ACP_syn_III_N"/>
</dbReference>
<dbReference type="InterPro" id="IPR004655">
    <property type="entry name" value="FabH"/>
</dbReference>
<dbReference type="InterPro" id="IPR016039">
    <property type="entry name" value="Thiolase-like"/>
</dbReference>
<dbReference type="NCBIfam" id="TIGR00747">
    <property type="entry name" value="fabH"/>
    <property type="match status" value="1"/>
</dbReference>
<dbReference type="NCBIfam" id="NF006829">
    <property type="entry name" value="PRK09352.1"/>
    <property type="match status" value="1"/>
</dbReference>
<dbReference type="PANTHER" id="PTHR43091">
    <property type="entry name" value="3-OXOACYL-[ACYL-CARRIER-PROTEIN] SYNTHASE"/>
    <property type="match status" value="1"/>
</dbReference>
<dbReference type="PANTHER" id="PTHR43091:SF1">
    <property type="entry name" value="BETA-KETOACYL-[ACYL-CARRIER-PROTEIN] SYNTHASE III, CHLOROPLASTIC"/>
    <property type="match status" value="1"/>
</dbReference>
<dbReference type="Pfam" id="PF08545">
    <property type="entry name" value="ACP_syn_III"/>
    <property type="match status" value="1"/>
</dbReference>
<dbReference type="Pfam" id="PF08541">
    <property type="entry name" value="ACP_syn_III_C"/>
    <property type="match status" value="1"/>
</dbReference>
<dbReference type="SUPFAM" id="SSF53901">
    <property type="entry name" value="Thiolase-like"/>
    <property type="match status" value="1"/>
</dbReference>
<reference key="1">
    <citation type="journal article" date="2003" name="Proc. Natl. Acad. Sci. U.S.A.">
        <title>The complete genome sequence of Mycobacterium bovis.</title>
        <authorList>
            <person name="Garnier T."/>
            <person name="Eiglmeier K."/>
            <person name="Camus J.-C."/>
            <person name="Medina N."/>
            <person name="Mansoor H."/>
            <person name="Pryor M."/>
            <person name="Duthoy S."/>
            <person name="Grondin S."/>
            <person name="Lacroix C."/>
            <person name="Monsempe C."/>
            <person name="Simon S."/>
            <person name="Harris B."/>
            <person name="Atkin R."/>
            <person name="Doggett J."/>
            <person name="Mayes R."/>
            <person name="Keating L."/>
            <person name="Wheeler P.R."/>
            <person name="Parkhill J."/>
            <person name="Barrell B.G."/>
            <person name="Cole S.T."/>
            <person name="Gordon S.V."/>
            <person name="Hewinson R.G."/>
        </authorList>
    </citation>
    <scope>NUCLEOTIDE SEQUENCE [LARGE SCALE GENOMIC DNA]</scope>
    <source>
        <strain>ATCC BAA-935 / AF2122/97</strain>
    </source>
</reference>
<reference key="2">
    <citation type="journal article" date="2017" name="Genome Announc.">
        <title>Updated reference genome sequence and annotation of Mycobacterium bovis AF2122/97.</title>
        <authorList>
            <person name="Malone K.M."/>
            <person name="Farrell D."/>
            <person name="Stuber T.P."/>
            <person name="Schubert O.T."/>
            <person name="Aebersold R."/>
            <person name="Robbe-Austerman S."/>
            <person name="Gordon S.V."/>
        </authorList>
    </citation>
    <scope>NUCLEOTIDE SEQUENCE [LARGE SCALE GENOMIC DNA]</scope>
    <scope>GENOME REANNOTATION</scope>
    <source>
        <strain>ATCC BAA-935 / AF2122/97</strain>
    </source>
</reference>
<keyword id="KW-0012">Acyltransferase</keyword>
<keyword id="KW-0963">Cytoplasm</keyword>
<keyword id="KW-0275">Fatty acid biosynthesis</keyword>
<keyword id="KW-0276">Fatty acid metabolism</keyword>
<keyword id="KW-0444">Lipid biosynthesis</keyword>
<keyword id="KW-0443">Lipid metabolism</keyword>
<keyword id="KW-0511">Multifunctional enzyme</keyword>
<keyword id="KW-1185">Reference proteome</keyword>
<keyword id="KW-0808">Transferase</keyword>
<sequence length="335" mass="34873">MTEIATTSGARSVGLLSVGAYRPERVVTNDEICQHIDSSDEWIYTRTGIKTRRFAADDESAASMATEACRRALSNAGLSAADIDGVIVTTNTHFLQTPPAAPMVAASLGAKGILGFDLSAGCAGFGYALGAAADMIRGGGAATMLVVGTEKLSPTIDMYDRGNCFIFADGAAAVVVGETPFQGIGPTVAGSDGEQADAIRQDIDWITFAQNPSGPRPFVRLEGPAVFRWAAFKMGDVGRRAMDAAGVRPDQIDVFVPHQANSRINELLVKNLQLRPDAVVANDIEHTGNTSAASIPLAMAELLTTGAAKPGDLALLIGYGAGLSYAAQVVRMPKG</sequence>